<comment type="function">
    <text evidence="1">Mannosyltransferase involved in glycosylphosphatidylinositol-anchor biosynthesis. Responsible for the transfer of the second mannose to the glycosylphosphatidylinositol during GPI precursor assembly (By similarity).</text>
</comment>
<comment type="pathway">
    <text>Glycolipid biosynthesis; glycosylphosphatidylinositol-anchor biosynthesis.</text>
</comment>
<comment type="subunit">
    <text evidence="1">Part of the GPI mannosyltransferase 2 complex composed of gpi18 and C167.09.</text>
</comment>
<comment type="subcellular location">
    <subcellularLocation>
        <location evidence="3">Endoplasmic reticulum membrane</location>
        <topology evidence="3">Multi-pass membrane protein</topology>
    </subcellularLocation>
</comment>
<comment type="similarity">
    <text evidence="4">Belongs to the PIGV family.</text>
</comment>
<keyword id="KW-0256">Endoplasmic reticulum</keyword>
<keyword id="KW-0325">Glycoprotein</keyword>
<keyword id="KW-0328">Glycosyltransferase</keyword>
<keyword id="KW-0337">GPI-anchor biosynthesis</keyword>
<keyword id="KW-0472">Membrane</keyword>
<keyword id="KW-1185">Reference proteome</keyword>
<keyword id="KW-0808">Transferase</keyword>
<keyword id="KW-0812">Transmembrane</keyword>
<keyword id="KW-1133">Transmembrane helix</keyword>
<reference key="1">
    <citation type="journal article" date="2002" name="Nature">
        <title>The genome sequence of Schizosaccharomyces pombe.</title>
        <authorList>
            <person name="Wood V."/>
            <person name="Gwilliam R."/>
            <person name="Rajandream M.A."/>
            <person name="Lyne M.H."/>
            <person name="Lyne R."/>
            <person name="Stewart A."/>
            <person name="Sgouros J.G."/>
            <person name="Peat N."/>
            <person name="Hayles J."/>
            <person name="Baker S.G."/>
            <person name="Basham D."/>
            <person name="Bowman S."/>
            <person name="Brooks K."/>
            <person name="Brown D."/>
            <person name="Brown S."/>
            <person name="Chillingworth T."/>
            <person name="Churcher C.M."/>
            <person name="Collins M."/>
            <person name="Connor R."/>
            <person name="Cronin A."/>
            <person name="Davis P."/>
            <person name="Feltwell T."/>
            <person name="Fraser A."/>
            <person name="Gentles S."/>
            <person name="Goble A."/>
            <person name="Hamlin N."/>
            <person name="Harris D.E."/>
            <person name="Hidalgo J."/>
            <person name="Hodgson G."/>
            <person name="Holroyd S."/>
            <person name="Hornsby T."/>
            <person name="Howarth S."/>
            <person name="Huckle E.J."/>
            <person name="Hunt S."/>
            <person name="Jagels K."/>
            <person name="James K.D."/>
            <person name="Jones L."/>
            <person name="Jones M."/>
            <person name="Leather S."/>
            <person name="McDonald S."/>
            <person name="McLean J."/>
            <person name="Mooney P."/>
            <person name="Moule S."/>
            <person name="Mungall K.L."/>
            <person name="Murphy L.D."/>
            <person name="Niblett D."/>
            <person name="Odell C."/>
            <person name="Oliver K."/>
            <person name="O'Neil S."/>
            <person name="Pearson D."/>
            <person name="Quail M.A."/>
            <person name="Rabbinowitsch E."/>
            <person name="Rutherford K.M."/>
            <person name="Rutter S."/>
            <person name="Saunders D."/>
            <person name="Seeger K."/>
            <person name="Sharp S."/>
            <person name="Skelton J."/>
            <person name="Simmonds M.N."/>
            <person name="Squares R."/>
            <person name="Squares S."/>
            <person name="Stevens K."/>
            <person name="Taylor K."/>
            <person name="Taylor R.G."/>
            <person name="Tivey A."/>
            <person name="Walsh S.V."/>
            <person name="Warren T."/>
            <person name="Whitehead S."/>
            <person name="Woodward J.R."/>
            <person name="Volckaert G."/>
            <person name="Aert R."/>
            <person name="Robben J."/>
            <person name="Grymonprez B."/>
            <person name="Weltjens I."/>
            <person name="Vanstreels E."/>
            <person name="Rieger M."/>
            <person name="Schaefer M."/>
            <person name="Mueller-Auer S."/>
            <person name="Gabel C."/>
            <person name="Fuchs M."/>
            <person name="Duesterhoeft A."/>
            <person name="Fritzc C."/>
            <person name="Holzer E."/>
            <person name="Moestl D."/>
            <person name="Hilbert H."/>
            <person name="Borzym K."/>
            <person name="Langer I."/>
            <person name="Beck A."/>
            <person name="Lehrach H."/>
            <person name="Reinhardt R."/>
            <person name="Pohl T.M."/>
            <person name="Eger P."/>
            <person name="Zimmermann W."/>
            <person name="Wedler H."/>
            <person name="Wambutt R."/>
            <person name="Purnelle B."/>
            <person name="Goffeau A."/>
            <person name="Cadieu E."/>
            <person name="Dreano S."/>
            <person name="Gloux S."/>
            <person name="Lelaure V."/>
            <person name="Mottier S."/>
            <person name="Galibert F."/>
            <person name="Aves S.J."/>
            <person name="Xiang Z."/>
            <person name="Hunt C."/>
            <person name="Moore K."/>
            <person name="Hurst S.M."/>
            <person name="Lucas M."/>
            <person name="Rochet M."/>
            <person name="Gaillardin C."/>
            <person name="Tallada V.A."/>
            <person name="Garzon A."/>
            <person name="Thode G."/>
            <person name="Daga R.R."/>
            <person name="Cruzado L."/>
            <person name="Jimenez J."/>
            <person name="Sanchez M."/>
            <person name="del Rey F."/>
            <person name="Benito J."/>
            <person name="Dominguez A."/>
            <person name="Revuelta J.L."/>
            <person name="Moreno S."/>
            <person name="Armstrong J."/>
            <person name="Forsburg S.L."/>
            <person name="Cerutti L."/>
            <person name="Lowe T."/>
            <person name="McCombie W.R."/>
            <person name="Paulsen I."/>
            <person name="Potashkin J."/>
            <person name="Shpakovski G.V."/>
            <person name="Ussery D."/>
            <person name="Barrell B.G."/>
            <person name="Nurse P."/>
        </authorList>
    </citation>
    <scope>NUCLEOTIDE SEQUENCE [LARGE SCALE GENOMIC DNA]</scope>
    <source>
        <strain>972 / ATCC 24843</strain>
    </source>
</reference>
<reference key="2">
    <citation type="journal article" date="2006" name="Nat. Biotechnol.">
        <title>ORFeome cloning and global analysis of protein localization in the fission yeast Schizosaccharomyces pombe.</title>
        <authorList>
            <person name="Matsuyama A."/>
            <person name="Arai R."/>
            <person name="Yashiroda Y."/>
            <person name="Shirai A."/>
            <person name="Kamata A."/>
            <person name="Sekido S."/>
            <person name="Kobayashi Y."/>
            <person name="Hashimoto A."/>
            <person name="Hamamoto M."/>
            <person name="Hiraoka Y."/>
            <person name="Horinouchi S."/>
            <person name="Yoshida M."/>
        </authorList>
    </citation>
    <scope>SUBCELLULAR LOCATION [LARGE SCALE ANALYSIS]</scope>
</reference>
<reference key="3">
    <citation type="journal article" date="2011" name="Genetics">
        <title>Augmented annotation of the Schizosaccharomyces pombe genome reveals additional genes required for growth and viability.</title>
        <authorList>
            <person name="Bitton D.A."/>
            <person name="Wood V."/>
            <person name="Scutt P.J."/>
            <person name="Grallert A."/>
            <person name="Yates T."/>
            <person name="Smith D.L."/>
            <person name="Hagan I.M."/>
            <person name="Miller C.J."/>
        </authorList>
    </citation>
    <scope>REVISION OF GENE MODEL</scope>
</reference>
<organism>
    <name type="scientific">Schizosaccharomyces pombe (strain 972 / ATCC 24843)</name>
    <name type="common">Fission yeast</name>
    <dbReference type="NCBI Taxonomy" id="284812"/>
    <lineage>
        <taxon>Eukaryota</taxon>
        <taxon>Fungi</taxon>
        <taxon>Dikarya</taxon>
        <taxon>Ascomycota</taxon>
        <taxon>Taphrinomycotina</taxon>
        <taxon>Schizosaccharomycetes</taxon>
        <taxon>Schizosaccharomycetales</taxon>
        <taxon>Schizosaccharomycetaceae</taxon>
        <taxon>Schizosaccharomyces</taxon>
    </lineage>
</organism>
<sequence>MYYIGHPSYYRKHIEHVCFQHSGILKKRNYQKNQKKYIMKLNESAMKNAEKKSNSYLAIRMTRSGYNYFKGICVCTFLLSTILYLGIAVIMSHLCVFDDTAMLYLRQNRSRLAESNIFRTLFISWIRWDAIYFVDMAVNGSLFEQEWAFSSLWPKIISFLAFRSKDVVLLGIVSCFASIFFHAIACYALYLLTKSIFSNQKMTAYTVIFYCFSPSGIYMSVGYTESLFAAFSFLGLLLFIKKQQYPAAFLWSLATLIRSNGIFWCIFFGMPAIGTLKISLERLQLTFMQVSQLVGYGTKCLIILVPFFYNQYLGFKLFCPGVAWCNKSLPLIYPAVQEKYWNVGFLRYWTLNNIPNFLFALLSIIPILFALFYSISGSTLHSFRSIKSHLVLSALYLYIGCFHMHTQVLNRMSSALPLLYWSMAHATLYAKSRNLKAFGHCILFVWIVYTVIQAGLYGSFLPPA</sequence>
<gene>
    <name type="primary">gpi18</name>
    <name type="ORF">SPAC18B11.05</name>
</gene>
<name>GPI18_SCHPO</name>
<accession>Q09712</accession>
<evidence type="ECO:0000250" key="1"/>
<evidence type="ECO:0000255" key="2"/>
<evidence type="ECO:0000269" key="3">
    <source>
    </source>
</evidence>
<evidence type="ECO:0000305" key="4"/>
<proteinExistence type="inferred from homology"/>
<dbReference type="EC" id="2.4.1.-"/>
<dbReference type="EMBL" id="CU329670">
    <property type="protein sequence ID" value="CAA90590.2"/>
    <property type="molecule type" value="Genomic_DNA"/>
</dbReference>
<dbReference type="PIR" id="T37909">
    <property type="entry name" value="S58304"/>
</dbReference>
<dbReference type="RefSeq" id="NP_592878.2">
    <property type="nucleotide sequence ID" value="NM_001018278.2"/>
</dbReference>
<dbReference type="FunCoup" id="Q09712">
    <property type="interactions" value="67"/>
</dbReference>
<dbReference type="STRING" id="284812.Q09712"/>
<dbReference type="CAZy" id="GT76">
    <property type="family name" value="Glycosyltransferase Family 76"/>
</dbReference>
<dbReference type="GlyCosmos" id="Q09712">
    <property type="glycosylation" value="3 sites, No reported glycans"/>
</dbReference>
<dbReference type="SwissPalm" id="Q09712"/>
<dbReference type="PaxDb" id="4896-SPAC18B11.05.1"/>
<dbReference type="EnsemblFungi" id="SPAC18B11.05.1">
    <property type="protein sequence ID" value="SPAC18B11.05.1:pep"/>
    <property type="gene ID" value="SPAC18B11.05"/>
</dbReference>
<dbReference type="PomBase" id="SPAC18B11.05">
    <property type="gene designation" value="gpi18"/>
</dbReference>
<dbReference type="VEuPathDB" id="FungiDB:SPAC18B11.05"/>
<dbReference type="eggNOG" id="KOG2647">
    <property type="taxonomic scope" value="Eukaryota"/>
</dbReference>
<dbReference type="HOGENOM" id="CLU_029048_0_0_1"/>
<dbReference type="InParanoid" id="Q09712"/>
<dbReference type="OMA" id="WITCHAI"/>
<dbReference type="Reactome" id="R-SPO-162710">
    <property type="pathway name" value="Synthesis of glycosylphosphatidylinositol (GPI)"/>
</dbReference>
<dbReference type="UniPathway" id="UPA00196"/>
<dbReference type="PRO" id="PR:Q09712"/>
<dbReference type="Proteomes" id="UP000002485">
    <property type="component" value="Chromosome I"/>
</dbReference>
<dbReference type="GO" id="GO:0005783">
    <property type="term" value="C:endoplasmic reticulum"/>
    <property type="evidence" value="ECO:0007005"/>
    <property type="project" value="PomBase"/>
</dbReference>
<dbReference type="GO" id="GO:0005789">
    <property type="term" value="C:endoplasmic reticulum membrane"/>
    <property type="evidence" value="ECO:0000318"/>
    <property type="project" value="GO_Central"/>
</dbReference>
<dbReference type="GO" id="GO:0120097">
    <property type="term" value="C:glycosylphosphatidylinositol-mannosyltransferase II complex"/>
    <property type="evidence" value="ECO:0000266"/>
    <property type="project" value="PomBase"/>
</dbReference>
<dbReference type="GO" id="GO:0031501">
    <property type="term" value="C:mannosyltransferase complex"/>
    <property type="evidence" value="ECO:0000318"/>
    <property type="project" value="GO_Central"/>
</dbReference>
<dbReference type="GO" id="GO:0033164">
    <property type="term" value="F:glycolipid 1,6-alpha-mannosyltransferase activity"/>
    <property type="evidence" value="ECO:0000250"/>
    <property type="project" value="PomBase"/>
</dbReference>
<dbReference type="GO" id="GO:0000030">
    <property type="term" value="F:mannosyltransferase activity"/>
    <property type="evidence" value="ECO:0000318"/>
    <property type="project" value="GO_Central"/>
</dbReference>
<dbReference type="GO" id="GO:0006506">
    <property type="term" value="P:GPI anchor biosynthetic process"/>
    <property type="evidence" value="ECO:0000318"/>
    <property type="project" value="GO_Central"/>
</dbReference>
<dbReference type="InterPro" id="IPR007315">
    <property type="entry name" value="PIG-V/Gpi18"/>
</dbReference>
<dbReference type="PANTHER" id="PTHR12468">
    <property type="entry name" value="GPI MANNOSYLTRANSFERASE 2"/>
    <property type="match status" value="1"/>
</dbReference>
<dbReference type="PANTHER" id="PTHR12468:SF2">
    <property type="entry name" value="GPI MANNOSYLTRANSFERASE 2"/>
    <property type="match status" value="1"/>
</dbReference>
<dbReference type="Pfam" id="PF04188">
    <property type="entry name" value="Mannosyl_trans2"/>
    <property type="match status" value="1"/>
</dbReference>
<protein>
    <recommendedName>
        <fullName>GPI mannosyltransferase 2</fullName>
        <ecNumber>2.4.1.-</ecNumber>
    </recommendedName>
    <alternativeName>
        <fullName>GPI mannosyltransferase II</fullName>
        <shortName>GPI-MT-II</shortName>
    </alternativeName>
    <alternativeName>
        <fullName>Glycosylphosphatidylinositol-anchor biosynthesis protein 18</fullName>
    </alternativeName>
</protein>
<feature type="chain" id="PRO_0000116387" description="GPI mannosyltransferase 2">
    <location>
        <begin position="1"/>
        <end position="464"/>
    </location>
</feature>
<feature type="topological domain" description="Cytoplasmic" evidence="2">
    <location>
        <begin position="1"/>
        <end position="70"/>
    </location>
</feature>
<feature type="transmembrane region" description="Helical" evidence="2">
    <location>
        <begin position="71"/>
        <end position="91"/>
    </location>
</feature>
<feature type="topological domain" description="Lumenal" evidence="2">
    <location>
        <begin position="92"/>
        <end position="166"/>
    </location>
</feature>
<feature type="transmembrane region" description="Helical" evidence="2">
    <location>
        <begin position="167"/>
        <end position="187"/>
    </location>
</feature>
<feature type="topological domain" description="Cytoplasmic" evidence="2">
    <location>
        <begin position="188"/>
        <end position="219"/>
    </location>
</feature>
<feature type="transmembrane region" description="Helical" evidence="2">
    <location>
        <begin position="220"/>
        <end position="240"/>
    </location>
</feature>
<feature type="topological domain" description="Lumenal" evidence="2">
    <location>
        <begin position="241"/>
        <end position="260"/>
    </location>
</feature>
<feature type="transmembrane region" description="Helical" evidence="2">
    <location>
        <begin position="261"/>
        <end position="281"/>
    </location>
</feature>
<feature type="topological domain" description="Cytoplasmic" evidence="2">
    <location>
        <begin position="282"/>
        <end position="289"/>
    </location>
</feature>
<feature type="transmembrane region" description="Helical" evidence="2">
    <location>
        <begin position="290"/>
        <end position="309"/>
    </location>
</feature>
<feature type="topological domain" description="Lumenal" evidence="2">
    <location>
        <begin position="310"/>
        <end position="356"/>
    </location>
</feature>
<feature type="transmembrane region" description="Helical" evidence="2">
    <location>
        <begin position="357"/>
        <end position="377"/>
    </location>
</feature>
<feature type="topological domain" description="Cytoplasmic" evidence="2">
    <location>
        <begin position="378"/>
        <end position="388"/>
    </location>
</feature>
<feature type="transmembrane region" description="Helical" evidence="2">
    <location>
        <begin position="389"/>
        <end position="409"/>
    </location>
</feature>
<feature type="topological domain" description="Lumenal" evidence="2">
    <location>
        <begin position="410"/>
        <end position="440"/>
    </location>
</feature>
<feature type="transmembrane region" description="Helical" evidence="2">
    <location>
        <begin position="441"/>
        <end position="461"/>
    </location>
</feature>
<feature type="topological domain" description="Cytoplasmic" evidence="2">
    <location>
        <begin position="462"/>
        <end position="464"/>
    </location>
</feature>
<feature type="glycosylation site" description="N-linked (GlcNAc...) asparagine" evidence="2">
    <location>
        <position position="108"/>
    </location>
</feature>
<feature type="glycosylation site" description="N-linked (GlcNAc...) asparagine" evidence="2">
    <location>
        <position position="139"/>
    </location>
</feature>
<feature type="glycosylation site" description="N-linked (GlcNAc...) asparagine" evidence="2">
    <location>
        <position position="326"/>
    </location>
</feature>